<dbReference type="EC" id="1.1.1.163" evidence="2"/>
<dbReference type="EC" id="1.1.1.245" evidence="3"/>
<dbReference type="EMBL" id="AJ418060">
    <property type="protein sequence ID" value="CAD10799.1"/>
    <property type="molecule type" value="Genomic_DNA"/>
</dbReference>
<dbReference type="SMR" id="Q937L4"/>
<dbReference type="UniPathway" id="UPA00764">
    <property type="reaction ID" value="UER00749"/>
</dbReference>
<dbReference type="GO" id="GO:0018460">
    <property type="term" value="F:cyclohexanol dehydrogenase activity"/>
    <property type="evidence" value="ECO:0007669"/>
    <property type="project" value="RHEA"/>
</dbReference>
<dbReference type="GO" id="GO:0055041">
    <property type="term" value="F:cyclopentanol dehydrogenase activity"/>
    <property type="evidence" value="ECO:0007669"/>
    <property type="project" value="UniProtKB-EC"/>
</dbReference>
<dbReference type="GO" id="GO:0033022">
    <property type="term" value="P:cyclopentanol catabolic process"/>
    <property type="evidence" value="ECO:0007669"/>
    <property type="project" value="UniProtKB-UniPathway"/>
</dbReference>
<dbReference type="CDD" id="cd05341">
    <property type="entry name" value="3beta-17beta-HSD_like_SDR_c"/>
    <property type="match status" value="1"/>
</dbReference>
<dbReference type="FunFam" id="3.40.50.720:FF:000084">
    <property type="entry name" value="Short-chain dehydrogenase reductase"/>
    <property type="match status" value="1"/>
</dbReference>
<dbReference type="Gene3D" id="3.40.50.720">
    <property type="entry name" value="NAD(P)-binding Rossmann-like Domain"/>
    <property type="match status" value="1"/>
</dbReference>
<dbReference type="InterPro" id="IPR036291">
    <property type="entry name" value="NAD(P)-bd_dom_sf"/>
</dbReference>
<dbReference type="InterPro" id="IPR002347">
    <property type="entry name" value="SDR_fam"/>
</dbReference>
<dbReference type="InterPro" id="IPR051122">
    <property type="entry name" value="SDR_superfamily_enzyme"/>
</dbReference>
<dbReference type="NCBIfam" id="NF005559">
    <property type="entry name" value="PRK07231.1"/>
    <property type="match status" value="1"/>
</dbReference>
<dbReference type="PANTHER" id="PTHR43477">
    <property type="entry name" value="DIHYDROANTICAPSIN 7-DEHYDROGENASE"/>
    <property type="match status" value="1"/>
</dbReference>
<dbReference type="PANTHER" id="PTHR43477:SF1">
    <property type="entry name" value="DIHYDROANTICAPSIN 7-DEHYDROGENASE"/>
    <property type="match status" value="1"/>
</dbReference>
<dbReference type="Pfam" id="PF13561">
    <property type="entry name" value="adh_short_C2"/>
    <property type="match status" value="1"/>
</dbReference>
<dbReference type="PRINTS" id="PR00081">
    <property type="entry name" value="GDHRDH"/>
</dbReference>
<dbReference type="PRINTS" id="PR00080">
    <property type="entry name" value="SDRFAMILY"/>
</dbReference>
<dbReference type="SUPFAM" id="SSF51735">
    <property type="entry name" value="NAD(P)-binding Rossmann-fold domains"/>
    <property type="match status" value="1"/>
</dbReference>
<evidence type="ECO:0000250" key="1">
    <source>
        <dbReference type="UniProtKB" id="P9WGT1"/>
    </source>
</evidence>
<evidence type="ECO:0000250" key="2">
    <source>
        <dbReference type="UniProtKB" id="Q8GAV9"/>
    </source>
</evidence>
<evidence type="ECO:0000269" key="3">
    <source>
    </source>
</evidence>
<evidence type="ECO:0000303" key="4">
    <source>
    </source>
</evidence>
<evidence type="ECO:0000305" key="5"/>
<protein>
    <recommendedName>
        <fullName evidence="2">Cyclopentanol dehydrogenase</fullName>
        <ecNumber evidence="2">1.1.1.163</ecNumber>
    </recommendedName>
    <alternativeName>
        <fullName evidence="4">Cyclohexanol dehydrogenase</fullName>
        <ecNumber evidence="3">1.1.1.245</ecNumber>
    </alternativeName>
</protein>
<keyword id="KW-0520">NAD</keyword>
<keyword id="KW-0560">Oxidoreductase</keyword>
<accession>Q937L4</accession>
<feature type="chain" id="PRO_0000054552" description="Cyclopentanol dehydrogenase">
    <location>
        <begin position="1"/>
        <end position="250"/>
    </location>
</feature>
<feature type="active site" description="Proton acceptor" evidence="1">
    <location>
        <position position="155"/>
    </location>
</feature>
<feature type="binding site" evidence="1">
    <location>
        <position position="18"/>
    </location>
    <ligand>
        <name>NAD(+)</name>
        <dbReference type="ChEBI" id="CHEBI:57540"/>
    </ligand>
</feature>
<feature type="binding site" evidence="1">
    <location>
        <position position="37"/>
    </location>
    <ligand>
        <name>NAD(+)</name>
        <dbReference type="ChEBI" id="CHEBI:57540"/>
    </ligand>
</feature>
<feature type="binding site" evidence="1">
    <location>
        <position position="63"/>
    </location>
    <ligand>
        <name>NAD(+)</name>
        <dbReference type="ChEBI" id="CHEBI:57540"/>
    </ligand>
</feature>
<feature type="binding site" evidence="1">
    <location>
        <position position="64"/>
    </location>
    <ligand>
        <name>NAD(+)</name>
        <dbReference type="ChEBI" id="CHEBI:57540"/>
    </ligand>
</feature>
<feature type="binding site" evidence="1">
    <location>
        <position position="90"/>
    </location>
    <ligand>
        <name>NAD(+)</name>
        <dbReference type="ChEBI" id="CHEBI:57540"/>
    </ligand>
</feature>
<feature type="binding site" evidence="1">
    <location>
        <position position="155"/>
    </location>
    <ligand>
        <name>NAD(+)</name>
        <dbReference type="ChEBI" id="CHEBI:57540"/>
    </ligand>
</feature>
<feature type="binding site" evidence="1">
    <location>
        <position position="159"/>
    </location>
    <ligand>
        <name>NAD(+)</name>
        <dbReference type="ChEBI" id="CHEBI:57540"/>
    </ligand>
</feature>
<feature type="binding site" evidence="1">
    <location>
        <position position="188"/>
    </location>
    <ligand>
        <name>NAD(+)</name>
        <dbReference type="ChEBI" id="CHEBI:57540"/>
    </ligand>
</feature>
<feature type="binding site" evidence="1">
    <location>
        <position position="190"/>
    </location>
    <ligand>
        <name>NAD(+)</name>
        <dbReference type="ChEBI" id="CHEBI:57540"/>
    </ligand>
</feature>
<feature type="binding site" evidence="1">
    <location>
        <position position="193"/>
    </location>
    <ligand>
        <name>NAD(+)</name>
        <dbReference type="ChEBI" id="CHEBI:57540"/>
    </ligand>
</feature>
<gene>
    <name evidence="4" type="primary">cpnA</name>
    <name type="synonym">cpmB</name>
</gene>
<name>CPNA_COMTE</name>
<organism>
    <name type="scientific">Comamonas testosteroni</name>
    <name type="common">Pseudomonas testosteroni</name>
    <dbReference type="NCBI Taxonomy" id="285"/>
    <lineage>
        <taxon>Bacteria</taxon>
        <taxon>Pseudomonadati</taxon>
        <taxon>Pseudomonadota</taxon>
        <taxon>Betaproteobacteria</taxon>
        <taxon>Burkholderiales</taxon>
        <taxon>Comamonadaceae</taxon>
        <taxon>Comamonas</taxon>
    </lineage>
</organism>
<proteinExistence type="evidence at protein level"/>
<sequence length="250" mass="26626">MGRVNDKVVLVTGGAMGMGLTHCTLLAREGATVYLSDMNEELGHQAVAEIRRQGGKAHFLHLDVTNENHWTGAVDTILAESDRLDALVNNAGILTLKPVQDTSNEEWDRIFEINVRSVFLGTRAVIEPMRKAHKGCIVNVSSIYGLVGAPGAAAYEASKGAVRLFTKACAVDLAPFNIRVNSVHPGVIATPMTQQILDAPQSARALLGPTLLGRAAQPMEVSQAVLFLVSDEASFVHGSELVVDGGYTAN</sequence>
<reference key="1">
    <citation type="journal article" date="2003" name="Environ. Microbiol.">
        <title>Cloning of Baeyer-Villiger monooxygenases from Comamonas, Xanthobacter and Rhodococcus via PCR with highly degenerate primers.</title>
        <authorList>
            <person name="van Beilen J.B."/>
            <person name="Mourlane F."/>
            <person name="Seeger M.A."/>
            <person name="Kovac J."/>
            <person name="Li Z."/>
            <person name="Smits T.H.M."/>
            <person name="Fritsche U."/>
            <person name="Witholt B."/>
        </authorList>
    </citation>
    <scope>NUCLEOTIDE SEQUENCE [GENOMIC DNA]</scope>
    <scope>FUNCTION</scope>
    <scope>CATALYTIC ACTIVITY</scope>
</reference>
<comment type="function">
    <text evidence="2 3">Catalyzes the oxidation of cyclopentanol to cyclopentanone and cyclohexanol to cyclohexanone.</text>
</comment>
<comment type="catalytic activity">
    <reaction evidence="2">
        <text>cyclopentanol + NAD(+) = cyclopentanone + NADH + H(+)</text>
        <dbReference type="Rhea" id="RHEA:11728"/>
        <dbReference type="ChEBI" id="CHEBI:15378"/>
        <dbReference type="ChEBI" id="CHEBI:16133"/>
        <dbReference type="ChEBI" id="CHEBI:16486"/>
        <dbReference type="ChEBI" id="CHEBI:57540"/>
        <dbReference type="ChEBI" id="CHEBI:57945"/>
        <dbReference type="EC" id="1.1.1.163"/>
    </reaction>
</comment>
<comment type="catalytic activity">
    <reaction evidence="3">
        <text>cyclohexanol + NAD(+) = cyclohexanone + NADH + H(+)</text>
        <dbReference type="Rhea" id="RHEA:10044"/>
        <dbReference type="ChEBI" id="CHEBI:15378"/>
        <dbReference type="ChEBI" id="CHEBI:17854"/>
        <dbReference type="ChEBI" id="CHEBI:18099"/>
        <dbReference type="ChEBI" id="CHEBI:57540"/>
        <dbReference type="ChEBI" id="CHEBI:57945"/>
        <dbReference type="EC" id="1.1.1.245"/>
    </reaction>
</comment>
<comment type="pathway">
    <text>Alcohol metabolism; cyclopentanol degradation; 5-valerolactone from cyclopentanol: step 1/2.</text>
</comment>
<comment type="similarity">
    <text evidence="5">Belongs to the short-chain dehydrogenases/reductases (SDR) family.</text>
</comment>